<evidence type="ECO:0000255" key="1">
    <source>
        <dbReference type="HAMAP-Rule" id="MF_01306"/>
    </source>
</evidence>
<evidence type="ECO:0000256" key="2">
    <source>
        <dbReference type="SAM" id="MobiDB-lite"/>
    </source>
</evidence>
<evidence type="ECO:0000305" key="3"/>
<feature type="chain" id="PRO_1000140687" description="Small ribosomal subunit protein uS4">
    <location>
        <begin position="1"/>
        <end position="200"/>
    </location>
</feature>
<feature type="domain" description="S4 RNA-binding" evidence="1">
    <location>
        <begin position="92"/>
        <end position="152"/>
    </location>
</feature>
<feature type="region of interest" description="Disordered" evidence="2">
    <location>
        <begin position="22"/>
        <end position="42"/>
    </location>
</feature>
<reference key="1">
    <citation type="journal article" date="2008" name="Chem. Biol. Interact.">
        <title>Extending the Bacillus cereus group genomics to putative food-borne pathogens of different toxicity.</title>
        <authorList>
            <person name="Lapidus A."/>
            <person name="Goltsman E."/>
            <person name="Auger S."/>
            <person name="Galleron N."/>
            <person name="Segurens B."/>
            <person name="Dossat C."/>
            <person name="Land M.L."/>
            <person name="Broussolle V."/>
            <person name="Brillard J."/>
            <person name="Guinebretiere M.-H."/>
            <person name="Sanchis V."/>
            <person name="Nguen-the C."/>
            <person name="Lereclus D."/>
            <person name="Richardson P."/>
            <person name="Wincker P."/>
            <person name="Weissenbach J."/>
            <person name="Ehrlich S.D."/>
            <person name="Sorokin A."/>
        </authorList>
    </citation>
    <scope>NUCLEOTIDE SEQUENCE [LARGE SCALE GENOMIC DNA]</scope>
    <source>
        <strain>KBAB4</strain>
    </source>
</reference>
<comment type="function">
    <text evidence="1">One of the primary rRNA binding proteins, it binds directly to 16S rRNA where it nucleates assembly of the body of the 30S subunit.</text>
</comment>
<comment type="function">
    <text evidence="1">With S5 and S12 plays an important role in translational accuracy.</text>
</comment>
<comment type="subunit">
    <text evidence="1">Part of the 30S ribosomal subunit. Contacts protein S5. The interaction surface between S4 and S5 is involved in control of translational fidelity.</text>
</comment>
<comment type="similarity">
    <text evidence="1">Belongs to the universal ribosomal protein uS4 family.</text>
</comment>
<organism>
    <name type="scientific">Bacillus mycoides (strain KBAB4)</name>
    <name type="common">Bacillus weihenstephanensis</name>
    <dbReference type="NCBI Taxonomy" id="315730"/>
    <lineage>
        <taxon>Bacteria</taxon>
        <taxon>Bacillati</taxon>
        <taxon>Bacillota</taxon>
        <taxon>Bacilli</taxon>
        <taxon>Bacillales</taxon>
        <taxon>Bacillaceae</taxon>
        <taxon>Bacillus</taxon>
        <taxon>Bacillus cereus group</taxon>
    </lineage>
</organism>
<protein>
    <recommendedName>
        <fullName evidence="1">Small ribosomal subunit protein uS4</fullName>
    </recommendedName>
    <alternativeName>
        <fullName evidence="3">30S ribosomal protein S4</fullName>
    </alternativeName>
</protein>
<dbReference type="EMBL" id="CP000903">
    <property type="protein sequence ID" value="ABY45642.1"/>
    <property type="molecule type" value="Genomic_DNA"/>
</dbReference>
<dbReference type="RefSeq" id="WP_002015568.1">
    <property type="nucleotide sequence ID" value="NC_010184.1"/>
</dbReference>
<dbReference type="SMR" id="A9VKG5"/>
<dbReference type="GeneID" id="66265787"/>
<dbReference type="KEGG" id="bwe:BcerKBAB4_4485"/>
<dbReference type="eggNOG" id="COG0522">
    <property type="taxonomic scope" value="Bacteria"/>
</dbReference>
<dbReference type="HOGENOM" id="CLU_092403_0_1_9"/>
<dbReference type="Proteomes" id="UP000002154">
    <property type="component" value="Chromosome"/>
</dbReference>
<dbReference type="GO" id="GO:0015935">
    <property type="term" value="C:small ribosomal subunit"/>
    <property type="evidence" value="ECO:0007669"/>
    <property type="project" value="InterPro"/>
</dbReference>
<dbReference type="GO" id="GO:0019843">
    <property type="term" value="F:rRNA binding"/>
    <property type="evidence" value="ECO:0007669"/>
    <property type="project" value="UniProtKB-UniRule"/>
</dbReference>
<dbReference type="GO" id="GO:0003735">
    <property type="term" value="F:structural constituent of ribosome"/>
    <property type="evidence" value="ECO:0007669"/>
    <property type="project" value="InterPro"/>
</dbReference>
<dbReference type="GO" id="GO:0042274">
    <property type="term" value="P:ribosomal small subunit biogenesis"/>
    <property type="evidence" value="ECO:0007669"/>
    <property type="project" value="TreeGrafter"/>
</dbReference>
<dbReference type="GO" id="GO:0006412">
    <property type="term" value="P:translation"/>
    <property type="evidence" value="ECO:0007669"/>
    <property type="project" value="UniProtKB-UniRule"/>
</dbReference>
<dbReference type="CDD" id="cd00165">
    <property type="entry name" value="S4"/>
    <property type="match status" value="1"/>
</dbReference>
<dbReference type="FunFam" id="1.10.1050.10:FF:000001">
    <property type="entry name" value="30S ribosomal protein S4"/>
    <property type="match status" value="1"/>
</dbReference>
<dbReference type="FunFam" id="3.10.290.10:FF:000001">
    <property type="entry name" value="30S ribosomal protein S4"/>
    <property type="match status" value="1"/>
</dbReference>
<dbReference type="Gene3D" id="1.10.1050.10">
    <property type="entry name" value="Ribosomal Protein S4 Delta 41, Chain A, domain 1"/>
    <property type="match status" value="1"/>
</dbReference>
<dbReference type="Gene3D" id="3.10.290.10">
    <property type="entry name" value="RNA-binding S4 domain"/>
    <property type="match status" value="1"/>
</dbReference>
<dbReference type="HAMAP" id="MF_01306_B">
    <property type="entry name" value="Ribosomal_uS4_B"/>
    <property type="match status" value="1"/>
</dbReference>
<dbReference type="InterPro" id="IPR022801">
    <property type="entry name" value="Ribosomal_uS4"/>
</dbReference>
<dbReference type="InterPro" id="IPR005709">
    <property type="entry name" value="Ribosomal_uS4_bac-type"/>
</dbReference>
<dbReference type="InterPro" id="IPR018079">
    <property type="entry name" value="Ribosomal_uS4_CS"/>
</dbReference>
<dbReference type="InterPro" id="IPR001912">
    <property type="entry name" value="Ribosomal_uS4_N"/>
</dbReference>
<dbReference type="InterPro" id="IPR002942">
    <property type="entry name" value="S4_RNA-bd"/>
</dbReference>
<dbReference type="InterPro" id="IPR036986">
    <property type="entry name" value="S4_RNA-bd_sf"/>
</dbReference>
<dbReference type="NCBIfam" id="NF003717">
    <property type="entry name" value="PRK05327.1"/>
    <property type="match status" value="1"/>
</dbReference>
<dbReference type="NCBIfam" id="TIGR01017">
    <property type="entry name" value="rpsD_bact"/>
    <property type="match status" value="1"/>
</dbReference>
<dbReference type="PANTHER" id="PTHR11831">
    <property type="entry name" value="30S 40S RIBOSOMAL PROTEIN"/>
    <property type="match status" value="1"/>
</dbReference>
<dbReference type="PANTHER" id="PTHR11831:SF4">
    <property type="entry name" value="SMALL RIBOSOMAL SUBUNIT PROTEIN US4M"/>
    <property type="match status" value="1"/>
</dbReference>
<dbReference type="Pfam" id="PF00163">
    <property type="entry name" value="Ribosomal_S4"/>
    <property type="match status" value="1"/>
</dbReference>
<dbReference type="Pfam" id="PF01479">
    <property type="entry name" value="S4"/>
    <property type="match status" value="1"/>
</dbReference>
<dbReference type="SMART" id="SM01390">
    <property type="entry name" value="Ribosomal_S4"/>
    <property type="match status" value="1"/>
</dbReference>
<dbReference type="SMART" id="SM00363">
    <property type="entry name" value="S4"/>
    <property type="match status" value="1"/>
</dbReference>
<dbReference type="SUPFAM" id="SSF55174">
    <property type="entry name" value="Alpha-L RNA-binding motif"/>
    <property type="match status" value="1"/>
</dbReference>
<dbReference type="PROSITE" id="PS00632">
    <property type="entry name" value="RIBOSOMAL_S4"/>
    <property type="match status" value="1"/>
</dbReference>
<dbReference type="PROSITE" id="PS50889">
    <property type="entry name" value="S4"/>
    <property type="match status" value="1"/>
</dbReference>
<name>RS4_BACMK</name>
<accession>A9VKG5</accession>
<sequence>MARYTGPAWKLSRRLGISLSGTGKELEKRPYAPGPHGPNQRKKLSEYGLQLQEKQKLRHMYGMTERQFRRTFDQAGKMPGKHGENFMILLEARLDNLVYRMGLARTRRAARQLVNHGHITVDGARVDIPSYRVKPNQTISVREKSNSLVVVKEAIEVNNFVPEYLTFDADKLEATYTRHAERSELAAEINEALIVEFYSR</sequence>
<proteinExistence type="inferred from homology"/>
<gene>
    <name evidence="1" type="primary">rpsD</name>
    <name type="ordered locus">BcerKBAB4_4485</name>
</gene>
<keyword id="KW-0687">Ribonucleoprotein</keyword>
<keyword id="KW-0689">Ribosomal protein</keyword>
<keyword id="KW-0694">RNA-binding</keyword>
<keyword id="KW-0699">rRNA-binding</keyword>